<gene>
    <name type="primary">DSTN</name>
    <name type="synonym">ACTDP</name>
    <name type="synonym">DSN</name>
</gene>
<accession>P60981</accession>
<accession>B2R6N2</accession>
<accession>B4DYA6</accession>
<accession>P18282</accession>
<accession>Q5W166</accession>
<accession>Q6IAW2</accession>
<feature type="initiator methionine" description="Removed" evidence="4 10 11 13 14 15 16 18">
    <location>
        <position position="1"/>
    </location>
</feature>
<feature type="chain" id="PRO_0000214918" description="Destrin">
    <location>
        <begin position="2"/>
        <end position="165"/>
    </location>
</feature>
<feature type="domain" description="ADF-H" evidence="2">
    <location>
        <begin position="4"/>
        <end position="153"/>
    </location>
</feature>
<feature type="short sequence motif" description="Nuclear localization signal" evidence="1">
    <location>
        <begin position="30"/>
        <end position="34"/>
    </location>
</feature>
<feature type="modified residue" description="N-acetylalanine" evidence="4 10 11 13 14 15 16 18">
    <location>
        <position position="2"/>
    </location>
</feature>
<feature type="modified residue" description="Phosphoserine" evidence="9 10 13 14 17">
    <location>
        <position position="3"/>
    </location>
</feature>
<feature type="modified residue" description="N6-acetyllysine" evidence="12">
    <location>
        <position position="19"/>
    </location>
</feature>
<feature type="splice variant" id="VSP_043069" description="In isoform 2." evidence="6">
    <location>
        <begin position="1"/>
        <end position="17"/>
    </location>
</feature>
<feature type="sequence variant" id="VAR_036459" description="In a colorectal cancer sample; somatic mutation." evidence="5">
    <original>G</original>
    <variation>E</variation>
    <location>
        <position position="139"/>
    </location>
</feature>
<reference key="1">
    <citation type="journal article" date="1993" name="Biochemistry">
        <title>Human actin depolymerizing factor mediates a pH-sensitive destruction of actin filaments.</title>
        <authorList>
            <person name="Hawkins M."/>
            <person name="Pope B."/>
            <person name="Maciver S.K."/>
            <person name="Weeds A.G."/>
        </authorList>
    </citation>
    <scope>NUCLEOTIDE SEQUENCE [MRNA] (ISOFORM 1)</scope>
    <source>
        <tissue>Brain</tissue>
    </source>
</reference>
<reference key="2">
    <citation type="submission" date="2004-06" db="EMBL/GenBank/DDBJ databases">
        <title>Cloning of human full open reading frames in Gateway(TM) system entry vector (pDONR201).</title>
        <authorList>
            <person name="Ebert L."/>
            <person name="Schick M."/>
            <person name="Neubert P."/>
            <person name="Schatten R."/>
            <person name="Henze S."/>
            <person name="Korn B."/>
        </authorList>
    </citation>
    <scope>NUCLEOTIDE SEQUENCE [LARGE SCALE MRNA] (ISOFORM 1)</scope>
</reference>
<reference key="3">
    <citation type="journal article" date="2004" name="Nat. Genet.">
        <title>Complete sequencing and characterization of 21,243 full-length human cDNAs.</title>
        <authorList>
            <person name="Ota T."/>
            <person name="Suzuki Y."/>
            <person name="Nishikawa T."/>
            <person name="Otsuki T."/>
            <person name="Sugiyama T."/>
            <person name="Irie R."/>
            <person name="Wakamatsu A."/>
            <person name="Hayashi K."/>
            <person name="Sato H."/>
            <person name="Nagai K."/>
            <person name="Kimura K."/>
            <person name="Makita H."/>
            <person name="Sekine M."/>
            <person name="Obayashi M."/>
            <person name="Nishi T."/>
            <person name="Shibahara T."/>
            <person name="Tanaka T."/>
            <person name="Ishii S."/>
            <person name="Yamamoto J."/>
            <person name="Saito K."/>
            <person name="Kawai Y."/>
            <person name="Isono Y."/>
            <person name="Nakamura Y."/>
            <person name="Nagahari K."/>
            <person name="Murakami K."/>
            <person name="Yasuda T."/>
            <person name="Iwayanagi T."/>
            <person name="Wagatsuma M."/>
            <person name="Shiratori A."/>
            <person name="Sudo H."/>
            <person name="Hosoiri T."/>
            <person name="Kaku Y."/>
            <person name="Kodaira H."/>
            <person name="Kondo H."/>
            <person name="Sugawara M."/>
            <person name="Takahashi M."/>
            <person name="Kanda K."/>
            <person name="Yokoi T."/>
            <person name="Furuya T."/>
            <person name="Kikkawa E."/>
            <person name="Omura Y."/>
            <person name="Abe K."/>
            <person name="Kamihara K."/>
            <person name="Katsuta N."/>
            <person name="Sato K."/>
            <person name="Tanikawa M."/>
            <person name="Yamazaki M."/>
            <person name="Ninomiya K."/>
            <person name="Ishibashi T."/>
            <person name="Yamashita H."/>
            <person name="Murakawa K."/>
            <person name="Fujimori K."/>
            <person name="Tanai H."/>
            <person name="Kimata M."/>
            <person name="Watanabe M."/>
            <person name="Hiraoka S."/>
            <person name="Chiba Y."/>
            <person name="Ishida S."/>
            <person name="Ono Y."/>
            <person name="Takiguchi S."/>
            <person name="Watanabe S."/>
            <person name="Yosida M."/>
            <person name="Hotuta T."/>
            <person name="Kusano J."/>
            <person name="Kanehori K."/>
            <person name="Takahashi-Fujii A."/>
            <person name="Hara H."/>
            <person name="Tanase T.-O."/>
            <person name="Nomura Y."/>
            <person name="Togiya S."/>
            <person name="Komai F."/>
            <person name="Hara R."/>
            <person name="Takeuchi K."/>
            <person name="Arita M."/>
            <person name="Imose N."/>
            <person name="Musashino K."/>
            <person name="Yuuki H."/>
            <person name="Oshima A."/>
            <person name="Sasaki N."/>
            <person name="Aotsuka S."/>
            <person name="Yoshikawa Y."/>
            <person name="Matsunawa H."/>
            <person name="Ichihara T."/>
            <person name="Shiohata N."/>
            <person name="Sano S."/>
            <person name="Moriya S."/>
            <person name="Momiyama H."/>
            <person name="Satoh N."/>
            <person name="Takami S."/>
            <person name="Terashima Y."/>
            <person name="Suzuki O."/>
            <person name="Nakagawa S."/>
            <person name="Senoh A."/>
            <person name="Mizoguchi H."/>
            <person name="Goto Y."/>
            <person name="Shimizu F."/>
            <person name="Wakebe H."/>
            <person name="Hishigaki H."/>
            <person name="Watanabe T."/>
            <person name="Sugiyama A."/>
            <person name="Takemoto M."/>
            <person name="Kawakami B."/>
            <person name="Yamazaki M."/>
            <person name="Watanabe K."/>
            <person name="Kumagai A."/>
            <person name="Itakura S."/>
            <person name="Fukuzumi Y."/>
            <person name="Fujimori Y."/>
            <person name="Komiyama M."/>
            <person name="Tashiro H."/>
            <person name="Tanigami A."/>
            <person name="Fujiwara T."/>
            <person name="Ono T."/>
            <person name="Yamada K."/>
            <person name="Fujii Y."/>
            <person name="Ozaki K."/>
            <person name="Hirao M."/>
            <person name="Ohmori Y."/>
            <person name="Kawabata A."/>
            <person name="Hikiji T."/>
            <person name="Kobatake N."/>
            <person name="Inagaki H."/>
            <person name="Ikema Y."/>
            <person name="Okamoto S."/>
            <person name="Okitani R."/>
            <person name="Kawakami T."/>
            <person name="Noguchi S."/>
            <person name="Itoh T."/>
            <person name="Shigeta K."/>
            <person name="Senba T."/>
            <person name="Matsumura K."/>
            <person name="Nakajima Y."/>
            <person name="Mizuno T."/>
            <person name="Morinaga M."/>
            <person name="Sasaki M."/>
            <person name="Togashi T."/>
            <person name="Oyama M."/>
            <person name="Hata H."/>
            <person name="Watanabe M."/>
            <person name="Komatsu T."/>
            <person name="Mizushima-Sugano J."/>
            <person name="Satoh T."/>
            <person name="Shirai Y."/>
            <person name="Takahashi Y."/>
            <person name="Nakagawa K."/>
            <person name="Okumura K."/>
            <person name="Nagase T."/>
            <person name="Nomura N."/>
            <person name="Kikuchi H."/>
            <person name="Masuho Y."/>
            <person name="Yamashita R."/>
            <person name="Nakai K."/>
            <person name="Yada T."/>
            <person name="Nakamura Y."/>
            <person name="Ohara O."/>
            <person name="Isogai T."/>
            <person name="Sugano S."/>
        </authorList>
    </citation>
    <scope>NUCLEOTIDE SEQUENCE [LARGE SCALE MRNA] (ISOFORMS 1 AND 2)</scope>
    <source>
        <tissue>Testis</tissue>
    </source>
</reference>
<reference key="4">
    <citation type="journal article" date="2001" name="Nature">
        <title>The DNA sequence and comparative analysis of human chromosome 20.</title>
        <authorList>
            <person name="Deloukas P."/>
            <person name="Matthews L.H."/>
            <person name="Ashurst J.L."/>
            <person name="Burton J."/>
            <person name="Gilbert J.G.R."/>
            <person name="Jones M."/>
            <person name="Stavrides G."/>
            <person name="Almeida J.P."/>
            <person name="Babbage A.K."/>
            <person name="Bagguley C.L."/>
            <person name="Bailey J."/>
            <person name="Barlow K.F."/>
            <person name="Bates K.N."/>
            <person name="Beard L.M."/>
            <person name="Beare D.M."/>
            <person name="Beasley O.P."/>
            <person name="Bird C.P."/>
            <person name="Blakey S.E."/>
            <person name="Bridgeman A.M."/>
            <person name="Brown A.J."/>
            <person name="Buck D."/>
            <person name="Burrill W.D."/>
            <person name="Butler A.P."/>
            <person name="Carder C."/>
            <person name="Carter N.P."/>
            <person name="Chapman J.C."/>
            <person name="Clamp M."/>
            <person name="Clark G."/>
            <person name="Clark L.N."/>
            <person name="Clark S.Y."/>
            <person name="Clee C.M."/>
            <person name="Clegg S."/>
            <person name="Cobley V.E."/>
            <person name="Collier R.E."/>
            <person name="Connor R.E."/>
            <person name="Corby N.R."/>
            <person name="Coulson A."/>
            <person name="Coville G.J."/>
            <person name="Deadman R."/>
            <person name="Dhami P.D."/>
            <person name="Dunn M."/>
            <person name="Ellington A.G."/>
            <person name="Frankland J.A."/>
            <person name="Fraser A."/>
            <person name="French L."/>
            <person name="Garner P."/>
            <person name="Grafham D.V."/>
            <person name="Griffiths C."/>
            <person name="Griffiths M.N.D."/>
            <person name="Gwilliam R."/>
            <person name="Hall R.E."/>
            <person name="Hammond S."/>
            <person name="Harley J.L."/>
            <person name="Heath P.D."/>
            <person name="Ho S."/>
            <person name="Holden J.L."/>
            <person name="Howden P.J."/>
            <person name="Huckle E."/>
            <person name="Hunt A.R."/>
            <person name="Hunt S.E."/>
            <person name="Jekosch K."/>
            <person name="Johnson C.M."/>
            <person name="Johnson D."/>
            <person name="Kay M.P."/>
            <person name="Kimberley A.M."/>
            <person name="King A."/>
            <person name="Knights A."/>
            <person name="Laird G.K."/>
            <person name="Lawlor S."/>
            <person name="Lehvaeslaiho M.H."/>
            <person name="Leversha M.A."/>
            <person name="Lloyd C."/>
            <person name="Lloyd D.M."/>
            <person name="Lovell J.D."/>
            <person name="Marsh V.L."/>
            <person name="Martin S.L."/>
            <person name="McConnachie L.J."/>
            <person name="McLay K."/>
            <person name="McMurray A.A."/>
            <person name="Milne S.A."/>
            <person name="Mistry D."/>
            <person name="Moore M.J.F."/>
            <person name="Mullikin J.C."/>
            <person name="Nickerson T."/>
            <person name="Oliver K."/>
            <person name="Parker A."/>
            <person name="Patel R."/>
            <person name="Pearce T.A.V."/>
            <person name="Peck A.I."/>
            <person name="Phillimore B.J.C.T."/>
            <person name="Prathalingam S.R."/>
            <person name="Plumb R.W."/>
            <person name="Ramsay H."/>
            <person name="Rice C.M."/>
            <person name="Ross M.T."/>
            <person name="Scott C.E."/>
            <person name="Sehra H.K."/>
            <person name="Shownkeen R."/>
            <person name="Sims S."/>
            <person name="Skuce C.D."/>
            <person name="Smith M.L."/>
            <person name="Soderlund C."/>
            <person name="Steward C.A."/>
            <person name="Sulston J.E."/>
            <person name="Swann R.M."/>
            <person name="Sycamore N."/>
            <person name="Taylor R."/>
            <person name="Tee L."/>
            <person name="Thomas D.W."/>
            <person name="Thorpe A."/>
            <person name="Tracey A."/>
            <person name="Tromans A.C."/>
            <person name="Vaudin M."/>
            <person name="Wall M."/>
            <person name="Wallis J.M."/>
            <person name="Whitehead S.L."/>
            <person name="Whittaker P."/>
            <person name="Willey D.L."/>
            <person name="Williams L."/>
            <person name="Williams S.A."/>
            <person name="Wilming L."/>
            <person name="Wray P.W."/>
            <person name="Hubbard T."/>
            <person name="Durbin R.M."/>
            <person name="Bentley D.R."/>
            <person name="Beck S."/>
            <person name="Rogers J."/>
        </authorList>
    </citation>
    <scope>NUCLEOTIDE SEQUENCE [LARGE SCALE GENOMIC DNA]</scope>
</reference>
<reference key="5">
    <citation type="submission" date="2005-09" db="EMBL/GenBank/DDBJ databases">
        <authorList>
            <person name="Mural R.J."/>
            <person name="Istrail S."/>
            <person name="Sutton G.G."/>
            <person name="Florea L."/>
            <person name="Halpern A.L."/>
            <person name="Mobarry C.M."/>
            <person name="Lippert R."/>
            <person name="Walenz B."/>
            <person name="Shatkay H."/>
            <person name="Dew I."/>
            <person name="Miller J.R."/>
            <person name="Flanigan M.J."/>
            <person name="Edwards N.J."/>
            <person name="Bolanos R."/>
            <person name="Fasulo D."/>
            <person name="Halldorsson B.V."/>
            <person name="Hannenhalli S."/>
            <person name="Turner R."/>
            <person name="Yooseph S."/>
            <person name="Lu F."/>
            <person name="Nusskern D.R."/>
            <person name="Shue B.C."/>
            <person name="Zheng X.H."/>
            <person name="Zhong F."/>
            <person name="Delcher A.L."/>
            <person name="Huson D.H."/>
            <person name="Kravitz S.A."/>
            <person name="Mouchard L."/>
            <person name="Reinert K."/>
            <person name="Remington K.A."/>
            <person name="Clark A.G."/>
            <person name="Waterman M.S."/>
            <person name="Eichler E.E."/>
            <person name="Adams M.D."/>
            <person name="Hunkapiller M.W."/>
            <person name="Myers E.W."/>
            <person name="Venter J.C."/>
        </authorList>
    </citation>
    <scope>NUCLEOTIDE SEQUENCE [LARGE SCALE GENOMIC DNA]</scope>
</reference>
<reference key="6">
    <citation type="journal article" date="2004" name="Genome Res.">
        <title>The status, quality, and expansion of the NIH full-length cDNA project: the Mammalian Gene Collection (MGC).</title>
        <authorList>
            <consortium name="The MGC Project Team"/>
        </authorList>
    </citation>
    <scope>NUCLEOTIDE SEQUENCE [LARGE SCALE MRNA] (ISOFORM 1)</scope>
    <source>
        <tissue>Lung</tissue>
    </source>
</reference>
<reference key="7">
    <citation type="journal article" date="2003" name="Nat. Biotechnol.">
        <title>Exploring proteomes and analyzing protein processing by mass spectrometric identification of sorted N-terminal peptides.</title>
        <authorList>
            <person name="Gevaert K."/>
            <person name="Goethals M."/>
            <person name="Martens L."/>
            <person name="Van Damme J."/>
            <person name="Staes A."/>
            <person name="Thomas G.R."/>
            <person name="Vandekerckhove J."/>
        </authorList>
    </citation>
    <scope>PROTEIN SEQUENCE OF 2-13</scope>
    <scope>ACETYLATION AT ALA-2</scope>
    <source>
        <tissue>Platelet</tissue>
    </source>
</reference>
<reference key="8">
    <citation type="submission" date="2007-03" db="UniProtKB">
        <authorList>
            <person name="Lubec G."/>
            <person name="Vishwanath V."/>
        </authorList>
    </citation>
    <scope>PROTEIN SEQUENCE OF 54-69</scope>
    <scope>IDENTIFICATION BY MASS SPECTROMETRY</scope>
    <source>
        <tissue>Brain</tissue>
        <tissue>Cajal-Retzius cell</tissue>
    </source>
</reference>
<reference key="9">
    <citation type="journal article" date="2002" name="J. Mol. Biol.">
        <title>Determining the differences in actin binding by human ADF and cofilin.</title>
        <authorList>
            <person name="Yeoh S."/>
            <person name="Pope B."/>
            <person name="Mannherz H.G."/>
            <person name="Weeds A."/>
        </authorList>
    </citation>
    <scope>FUNCTION</scope>
</reference>
<reference key="10">
    <citation type="journal article" date="2006" name="Cell">
        <title>Global, in vivo, and site-specific phosphorylation dynamics in signaling networks.</title>
        <authorList>
            <person name="Olsen J.V."/>
            <person name="Blagoev B."/>
            <person name="Gnad F."/>
            <person name="Macek B."/>
            <person name="Kumar C."/>
            <person name="Mortensen P."/>
            <person name="Mann M."/>
        </authorList>
    </citation>
    <scope>PHOSPHORYLATION [LARGE SCALE ANALYSIS] AT SER-3</scope>
    <scope>IDENTIFICATION BY MASS SPECTROMETRY [LARGE SCALE ANALYSIS]</scope>
    <source>
        <tissue>Cervix carcinoma</tissue>
    </source>
</reference>
<reference key="11">
    <citation type="journal article" date="2006" name="Proc. Natl. Acad. Sci. U.S.A.">
        <title>HERC5 is an IFN-induced HECT-type E3 protein ligase that mediates type I IFN-induced ISGylation of protein targets.</title>
        <authorList>
            <person name="Wong J.J."/>
            <person name="Pung Y.F."/>
            <person name="Sze N.S."/>
            <person name="Chin K.C."/>
        </authorList>
    </citation>
    <scope>ISGYLATION</scope>
</reference>
<reference key="12">
    <citation type="journal article" date="2009" name="Anal. Chem.">
        <title>Lys-N and trypsin cover complementary parts of the phosphoproteome in a refined SCX-based approach.</title>
        <authorList>
            <person name="Gauci S."/>
            <person name="Helbig A.O."/>
            <person name="Slijper M."/>
            <person name="Krijgsveld J."/>
            <person name="Heck A.J."/>
            <person name="Mohammed S."/>
        </authorList>
    </citation>
    <scope>ACETYLATION [LARGE SCALE ANALYSIS] AT ALA-2</scope>
    <scope>CLEAVAGE OF INITIATOR METHIONINE [LARGE SCALE ANALYSIS]</scope>
    <scope>IDENTIFICATION BY MASS SPECTROMETRY [LARGE SCALE ANALYSIS]</scope>
</reference>
<reference key="13">
    <citation type="journal article" date="2009" name="Mol. Cell. Proteomics">
        <title>Large-scale proteomics analysis of the human kinome.</title>
        <authorList>
            <person name="Oppermann F.S."/>
            <person name="Gnad F."/>
            <person name="Olsen J.V."/>
            <person name="Hornberger R."/>
            <person name="Greff Z."/>
            <person name="Keri G."/>
            <person name="Mann M."/>
            <person name="Daub H."/>
        </authorList>
    </citation>
    <scope>ACETYLATION [LARGE SCALE ANALYSIS] AT ALA-2</scope>
    <scope>PHOSPHORYLATION [LARGE SCALE ANALYSIS] AT SER-3</scope>
    <scope>CLEAVAGE OF INITIATOR METHIONINE [LARGE SCALE ANALYSIS]</scope>
    <scope>IDENTIFICATION BY MASS SPECTROMETRY [LARGE SCALE ANALYSIS]</scope>
</reference>
<reference key="14">
    <citation type="journal article" date="2009" name="Science">
        <title>Lysine acetylation targets protein complexes and co-regulates major cellular functions.</title>
        <authorList>
            <person name="Choudhary C."/>
            <person name="Kumar C."/>
            <person name="Gnad F."/>
            <person name="Nielsen M.L."/>
            <person name="Rehman M."/>
            <person name="Walther T.C."/>
            <person name="Olsen J.V."/>
            <person name="Mann M."/>
        </authorList>
    </citation>
    <scope>ACETYLATION [LARGE SCALE ANALYSIS] AT LYS-19</scope>
    <scope>IDENTIFICATION BY MASS SPECTROMETRY [LARGE SCALE ANALYSIS]</scope>
</reference>
<reference key="15">
    <citation type="journal article" date="2010" name="Sci. Signal.">
        <title>Quantitative phosphoproteomics reveals widespread full phosphorylation site occupancy during mitosis.</title>
        <authorList>
            <person name="Olsen J.V."/>
            <person name="Vermeulen M."/>
            <person name="Santamaria A."/>
            <person name="Kumar C."/>
            <person name="Miller M.L."/>
            <person name="Jensen L.J."/>
            <person name="Gnad F."/>
            <person name="Cox J."/>
            <person name="Jensen T.S."/>
            <person name="Nigg E.A."/>
            <person name="Brunak S."/>
            <person name="Mann M."/>
        </authorList>
    </citation>
    <scope>ACETYLATION [LARGE SCALE ANALYSIS] AT ALA-2</scope>
    <scope>PHOSPHORYLATION [LARGE SCALE ANALYSIS] AT SER-3</scope>
    <scope>CLEAVAGE OF INITIATOR METHIONINE [LARGE SCALE ANALYSIS]</scope>
    <scope>IDENTIFICATION BY MASS SPECTROMETRY [LARGE SCALE ANALYSIS]</scope>
    <source>
        <tissue>Cervix carcinoma</tissue>
    </source>
</reference>
<reference key="16">
    <citation type="journal article" date="2011" name="BMC Syst. Biol.">
        <title>Initial characterization of the human central proteome.</title>
        <authorList>
            <person name="Burkard T.R."/>
            <person name="Planyavsky M."/>
            <person name="Kaupe I."/>
            <person name="Breitwieser F.P."/>
            <person name="Buerckstuemmer T."/>
            <person name="Bennett K.L."/>
            <person name="Superti-Furga G."/>
            <person name="Colinge J."/>
        </authorList>
    </citation>
    <scope>IDENTIFICATION BY MASS SPECTROMETRY [LARGE SCALE ANALYSIS]</scope>
</reference>
<reference key="17">
    <citation type="journal article" date="2011" name="Sci. Signal.">
        <title>System-wide temporal characterization of the proteome and phosphoproteome of human embryonic stem cell differentiation.</title>
        <authorList>
            <person name="Rigbolt K.T."/>
            <person name="Prokhorova T.A."/>
            <person name="Akimov V."/>
            <person name="Henningsen J."/>
            <person name="Johansen P.T."/>
            <person name="Kratchmarova I."/>
            <person name="Kassem M."/>
            <person name="Mann M."/>
            <person name="Olsen J.V."/>
            <person name="Blagoev B."/>
        </authorList>
    </citation>
    <scope>ACETYLATION [LARGE SCALE ANALYSIS] AT ALA-2</scope>
    <scope>PHOSPHORYLATION [LARGE SCALE ANALYSIS] AT SER-3</scope>
    <scope>CLEAVAGE OF INITIATOR METHIONINE [LARGE SCALE ANALYSIS]</scope>
    <scope>IDENTIFICATION BY MASS SPECTROMETRY [LARGE SCALE ANALYSIS]</scope>
</reference>
<reference key="18">
    <citation type="journal article" date="2012" name="Mol. Cell. Proteomics">
        <title>Comparative large-scale characterisation of plant vs. mammal proteins reveals similar and idiosyncratic N-alpha acetylation features.</title>
        <authorList>
            <person name="Bienvenut W.V."/>
            <person name="Sumpton D."/>
            <person name="Martinez A."/>
            <person name="Lilla S."/>
            <person name="Espagne C."/>
            <person name="Meinnel T."/>
            <person name="Giglione C."/>
        </authorList>
    </citation>
    <scope>ACETYLATION [LARGE SCALE ANALYSIS] AT ALA-2</scope>
    <scope>CLEAVAGE OF INITIATOR METHIONINE [LARGE SCALE ANALYSIS]</scope>
    <scope>IDENTIFICATION BY MASS SPECTROMETRY [LARGE SCALE ANALYSIS]</scope>
</reference>
<reference key="19">
    <citation type="journal article" date="2012" name="Proc. Natl. Acad. Sci. U.S.A.">
        <title>N-terminal acetylome analyses and functional insights of the N-terminal acetyltransferase NatB.</title>
        <authorList>
            <person name="Van Damme P."/>
            <person name="Lasa M."/>
            <person name="Polevoda B."/>
            <person name="Gazquez C."/>
            <person name="Elosegui-Artola A."/>
            <person name="Kim D.S."/>
            <person name="De Juan-Pardo E."/>
            <person name="Demeyer K."/>
            <person name="Hole K."/>
            <person name="Larrea E."/>
            <person name="Timmerman E."/>
            <person name="Prieto J."/>
            <person name="Arnesen T."/>
            <person name="Sherman F."/>
            <person name="Gevaert K."/>
            <person name="Aldabe R."/>
        </authorList>
    </citation>
    <scope>ACETYLATION [LARGE SCALE ANALYSIS] AT ALA-2</scope>
    <scope>CLEAVAGE OF INITIATOR METHIONINE [LARGE SCALE ANALYSIS]</scope>
    <scope>IDENTIFICATION BY MASS SPECTROMETRY [LARGE SCALE ANALYSIS]</scope>
</reference>
<reference key="20">
    <citation type="journal article" date="2013" name="J. Proteome Res.">
        <title>Toward a comprehensive characterization of a human cancer cell phosphoproteome.</title>
        <authorList>
            <person name="Zhou H."/>
            <person name="Di Palma S."/>
            <person name="Preisinger C."/>
            <person name="Peng M."/>
            <person name="Polat A.N."/>
            <person name="Heck A.J."/>
            <person name="Mohammed S."/>
        </authorList>
    </citation>
    <scope>PHOSPHORYLATION [LARGE SCALE ANALYSIS] AT SER-3</scope>
    <scope>IDENTIFICATION BY MASS SPECTROMETRY [LARGE SCALE ANALYSIS]</scope>
    <source>
        <tissue>Cervix carcinoma</tissue>
        <tissue>Erythroleukemia</tissue>
    </source>
</reference>
<reference key="21">
    <citation type="journal article" date="2015" name="Proteomics">
        <title>N-terminome analysis of the human mitochondrial proteome.</title>
        <authorList>
            <person name="Vaca Jacome A.S."/>
            <person name="Rabilloud T."/>
            <person name="Schaeffer-Reiss C."/>
            <person name="Rompais M."/>
            <person name="Ayoub D."/>
            <person name="Lane L."/>
            <person name="Bairoch A."/>
            <person name="Van Dorsselaer A."/>
            <person name="Carapito C."/>
        </authorList>
    </citation>
    <scope>ACETYLATION [LARGE SCALE ANALYSIS] AT ALA-2</scope>
    <scope>CLEAVAGE OF INITIATOR METHIONINE [LARGE SCALE ANALYSIS]</scope>
    <scope>IDENTIFICATION BY MASS SPECTROMETRY [LARGE SCALE ANALYSIS]</scope>
</reference>
<reference key="22">
    <citation type="journal article" date="2006" name="Science">
        <title>The consensus coding sequences of human breast and colorectal cancers.</title>
        <authorList>
            <person name="Sjoeblom T."/>
            <person name="Jones S."/>
            <person name="Wood L.D."/>
            <person name="Parsons D.W."/>
            <person name="Lin J."/>
            <person name="Barber T.D."/>
            <person name="Mandelker D."/>
            <person name="Leary R.J."/>
            <person name="Ptak J."/>
            <person name="Silliman N."/>
            <person name="Szabo S."/>
            <person name="Buckhaults P."/>
            <person name="Farrell C."/>
            <person name="Meeh P."/>
            <person name="Markowitz S.D."/>
            <person name="Willis J."/>
            <person name="Dawson D."/>
            <person name="Willson J.K.V."/>
            <person name="Gazdar A.F."/>
            <person name="Hartigan J."/>
            <person name="Wu L."/>
            <person name="Liu C."/>
            <person name="Parmigiani G."/>
            <person name="Park B.H."/>
            <person name="Bachman K.E."/>
            <person name="Papadopoulos N."/>
            <person name="Vogelstein B."/>
            <person name="Kinzler K.W."/>
            <person name="Velculescu V.E."/>
        </authorList>
    </citation>
    <scope>VARIANT [LARGE SCALE ANALYSIS] GLU-139</scope>
</reference>
<protein>
    <recommendedName>
        <fullName>Destrin</fullName>
    </recommendedName>
    <alternativeName>
        <fullName>Actin-depolymerizing factor</fullName>
        <shortName>ADF</shortName>
    </alternativeName>
</protein>
<dbReference type="EMBL" id="S65738">
    <property type="protein sequence ID" value="AAB28361.1"/>
    <property type="molecule type" value="mRNA"/>
</dbReference>
<dbReference type="EMBL" id="CR457042">
    <property type="protein sequence ID" value="CAG33323.1"/>
    <property type="molecule type" value="mRNA"/>
</dbReference>
<dbReference type="EMBL" id="AK302338">
    <property type="protein sequence ID" value="BAG63668.1"/>
    <property type="molecule type" value="mRNA"/>
</dbReference>
<dbReference type="EMBL" id="AK312645">
    <property type="protein sequence ID" value="BAG35529.1"/>
    <property type="molecule type" value="mRNA"/>
</dbReference>
<dbReference type="EMBL" id="AL132765">
    <property type="status" value="NOT_ANNOTATED_CDS"/>
    <property type="molecule type" value="Genomic_DNA"/>
</dbReference>
<dbReference type="EMBL" id="CH471133">
    <property type="protein sequence ID" value="EAX10274.1"/>
    <property type="molecule type" value="Genomic_DNA"/>
</dbReference>
<dbReference type="EMBL" id="CH471133">
    <property type="protein sequence ID" value="EAX10275.1"/>
    <property type="molecule type" value="Genomic_DNA"/>
</dbReference>
<dbReference type="EMBL" id="CH471133">
    <property type="protein sequence ID" value="EAX10276.1"/>
    <property type="molecule type" value="Genomic_DNA"/>
</dbReference>
<dbReference type="EMBL" id="BC009477">
    <property type="protein sequence ID" value="AAH09477.1"/>
    <property type="molecule type" value="mRNA"/>
</dbReference>
<dbReference type="CCDS" id="CCDS13127.1">
    <molecule id="P60981-1"/>
</dbReference>
<dbReference type="CCDS" id="CCDS46580.1">
    <molecule id="P60981-2"/>
</dbReference>
<dbReference type="PIR" id="A54184">
    <property type="entry name" value="A54184"/>
</dbReference>
<dbReference type="RefSeq" id="NP_001011546.1">
    <molecule id="P60981-2"/>
    <property type="nucleotide sequence ID" value="NM_001011546.2"/>
</dbReference>
<dbReference type="RefSeq" id="NP_006861.1">
    <molecule id="P60981-1"/>
    <property type="nucleotide sequence ID" value="NM_006870.4"/>
</dbReference>
<dbReference type="RefSeq" id="XP_011527444.1">
    <property type="nucleotide sequence ID" value="XM_011529142.1"/>
</dbReference>
<dbReference type="RefSeq" id="XP_011527445.1">
    <property type="nucleotide sequence ID" value="XM_011529143.1"/>
</dbReference>
<dbReference type="RefSeq" id="XP_011527446.1">
    <property type="nucleotide sequence ID" value="XM_011529144.1"/>
</dbReference>
<dbReference type="RefSeq" id="XP_054178845.1">
    <molecule id="P60981-1"/>
    <property type="nucleotide sequence ID" value="XM_054322870.1"/>
</dbReference>
<dbReference type="RefSeq" id="XP_054178846.1">
    <molecule id="P60981-1"/>
    <property type="nucleotide sequence ID" value="XM_054322871.1"/>
</dbReference>
<dbReference type="RefSeq" id="XP_054178847.1">
    <molecule id="P60981-1"/>
    <property type="nucleotide sequence ID" value="XM_054322872.1"/>
</dbReference>
<dbReference type="SMR" id="P60981"/>
<dbReference type="BioGRID" id="116223">
    <property type="interactions" value="193"/>
</dbReference>
<dbReference type="FunCoup" id="P60981">
    <property type="interactions" value="1315"/>
</dbReference>
<dbReference type="IntAct" id="P60981">
    <property type="interactions" value="33"/>
</dbReference>
<dbReference type="MINT" id="P60981"/>
<dbReference type="STRING" id="9606.ENSP00000246069"/>
<dbReference type="DrugBank" id="DB04147">
    <property type="generic name" value="Dodecyldimethylamine N-oxide"/>
</dbReference>
<dbReference type="GlyGen" id="P60981">
    <property type="glycosylation" value="1 site, 1 O-linked glycan (1 site)"/>
</dbReference>
<dbReference type="iPTMnet" id="P60981"/>
<dbReference type="MetOSite" id="P60981"/>
<dbReference type="PhosphoSitePlus" id="P60981"/>
<dbReference type="SwissPalm" id="P60981"/>
<dbReference type="BioMuta" id="DSTN"/>
<dbReference type="DMDM" id="46577586"/>
<dbReference type="OGP" id="P18282"/>
<dbReference type="REPRODUCTION-2DPAGE" id="IPI00473014"/>
<dbReference type="jPOST" id="P60981"/>
<dbReference type="MassIVE" id="P60981"/>
<dbReference type="PaxDb" id="9606-ENSP00000246069"/>
<dbReference type="PeptideAtlas" id="P60981"/>
<dbReference type="PRIDE" id="P60981"/>
<dbReference type="ProteomicsDB" id="57240">
    <molecule id="P60981-1"/>
</dbReference>
<dbReference type="ProteomicsDB" id="57241">
    <molecule id="P60981-2"/>
</dbReference>
<dbReference type="Pumba" id="P60981"/>
<dbReference type="Antibodypedia" id="9232">
    <property type="antibodies" value="424 antibodies from 29 providers"/>
</dbReference>
<dbReference type="DNASU" id="11034"/>
<dbReference type="Ensembl" id="ENST00000246069.12">
    <molecule id="P60981-1"/>
    <property type="protein sequence ID" value="ENSP00000246069.6"/>
    <property type="gene ID" value="ENSG00000125868.16"/>
</dbReference>
<dbReference type="Ensembl" id="ENST00000474024.5">
    <molecule id="P60981-2"/>
    <property type="protein sequence ID" value="ENSP00000476975.1"/>
    <property type="gene ID" value="ENSG00000125868.16"/>
</dbReference>
<dbReference type="GeneID" id="11034"/>
<dbReference type="KEGG" id="hsa:11034"/>
<dbReference type="MANE-Select" id="ENST00000246069.12">
    <property type="protein sequence ID" value="ENSP00000246069.6"/>
    <property type="RefSeq nucleotide sequence ID" value="NM_006870.4"/>
    <property type="RefSeq protein sequence ID" value="NP_006861.1"/>
</dbReference>
<dbReference type="UCSC" id="uc002wpq.4">
    <molecule id="P60981-1"/>
    <property type="organism name" value="human"/>
</dbReference>
<dbReference type="AGR" id="HGNC:15750"/>
<dbReference type="CTD" id="11034"/>
<dbReference type="DisGeNET" id="11034"/>
<dbReference type="GeneCards" id="DSTN"/>
<dbReference type="HGNC" id="HGNC:15750">
    <property type="gene designation" value="DSTN"/>
</dbReference>
<dbReference type="HPA" id="ENSG00000125868">
    <property type="expression patterns" value="Low tissue specificity"/>
</dbReference>
<dbReference type="MIM" id="609114">
    <property type="type" value="gene"/>
</dbReference>
<dbReference type="neXtProt" id="NX_P60981"/>
<dbReference type="OpenTargets" id="ENSG00000125868"/>
<dbReference type="PharmGKB" id="PA27509"/>
<dbReference type="VEuPathDB" id="HostDB:ENSG00000125868"/>
<dbReference type="eggNOG" id="KOG1735">
    <property type="taxonomic scope" value="Eukaryota"/>
</dbReference>
<dbReference type="GeneTree" id="ENSGT00950000183000"/>
<dbReference type="InParanoid" id="P60981"/>
<dbReference type="OMA" id="ITFYSWS"/>
<dbReference type="OrthoDB" id="10249245at2759"/>
<dbReference type="PAN-GO" id="P60981">
    <property type="GO annotations" value="6 GO annotations based on evolutionary models"/>
</dbReference>
<dbReference type="PhylomeDB" id="P60981"/>
<dbReference type="TreeFam" id="TF328601"/>
<dbReference type="PathwayCommons" id="P60981"/>
<dbReference type="SignaLink" id="P60981"/>
<dbReference type="SIGNOR" id="P60981"/>
<dbReference type="BioGRID-ORCS" id="11034">
    <property type="hits" value="84 hits in 1120 CRISPR screens"/>
</dbReference>
<dbReference type="CD-CODE" id="DEE660B4">
    <property type="entry name" value="Stress granule"/>
</dbReference>
<dbReference type="CD-CODE" id="FB4E32DD">
    <property type="entry name" value="Presynaptic clusters and postsynaptic densities"/>
</dbReference>
<dbReference type="ChiTaRS" id="DSTN">
    <property type="organism name" value="human"/>
</dbReference>
<dbReference type="GenomeRNAi" id="11034"/>
<dbReference type="Pharos" id="P60981">
    <property type="development level" value="Tbio"/>
</dbReference>
<dbReference type="PRO" id="PR:P60981"/>
<dbReference type="Proteomes" id="UP000005640">
    <property type="component" value="Chromosome 20"/>
</dbReference>
<dbReference type="RNAct" id="P60981">
    <property type="molecule type" value="protein"/>
</dbReference>
<dbReference type="Bgee" id="ENSG00000125868">
    <property type="expression patterns" value="Expressed in saphenous vein and 218 other cell types or tissues"/>
</dbReference>
<dbReference type="ExpressionAtlas" id="P60981">
    <property type="expression patterns" value="baseline and differential"/>
</dbReference>
<dbReference type="GO" id="GO:0015629">
    <property type="term" value="C:actin cytoskeleton"/>
    <property type="evidence" value="ECO:0000318"/>
    <property type="project" value="GO_Central"/>
</dbReference>
<dbReference type="GO" id="GO:0030864">
    <property type="term" value="C:cortical actin cytoskeleton"/>
    <property type="evidence" value="ECO:0007669"/>
    <property type="project" value="Ensembl"/>
</dbReference>
<dbReference type="GO" id="GO:0005737">
    <property type="term" value="C:cytoplasm"/>
    <property type="evidence" value="ECO:0000318"/>
    <property type="project" value="GO_Central"/>
</dbReference>
<dbReference type="GO" id="GO:0070062">
    <property type="term" value="C:extracellular exosome"/>
    <property type="evidence" value="ECO:0007005"/>
    <property type="project" value="UniProtKB"/>
</dbReference>
<dbReference type="GO" id="GO:0098978">
    <property type="term" value="C:glutamatergic synapse"/>
    <property type="evidence" value="ECO:0007669"/>
    <property type="project" value="Ensembl"/>
</dbReference>
<dbReference type="GO" id="GO:0098794">
    <property type="term" value="C:postsynapse"/>
    <property type="evidence" value="ECO:0007669"/>
    <property type="project" value="Ensembl"/>
</dbReference>
<dbReference type="GO" id="GO:0098793">
    <property type="term" value="C:presynapse"/>
    <property type="evidence" value="ECO:0007669"/>
    <property type="project" value="Ensembl"/>
</dbReference>
<dbReference type="GO" id="GO:0051015">
    <property type="term" value="F:actin filament binding"/>
    <property type="evidence" value="ECO:0000314"/>
    <property type="project" value="UniProtKB"/>
</dbReference>
<dbReference type="GO" id="GO:0030042">
    <property type="term" value="P:actin filament depolymerization"/>
    <property type="evidence" value="ECO:0000314"/>
    <property type="project" value="UniProtKB"/>
</dbReference>
<dbReference type="GO" id="GO:0030043">
    <property type="term" value="P:actin filament fragmentation"/>
    <property type="evidence" value="ECO:0000318"/>
    <property type="project" value="GO_Central"/>
</dbReference>
<dbReference type="GO" id="GO:0051014">
    <property type="term" value="P:actin filament severing"/>
    <property type="evidence" value="ECO:0000318"/>
    <property type="project" value="GO_Central"/>
</dbReference>
<dbReference type="GO" id="GO:0008154">
    <property type="term" value="P:actin polymerization or depolymerization"/>
    <property type="evidence" value="ECO:0000304"/>
    <property type="project" value="ProtInc"/>
</dbReference>
<dbReference type="GO" id="GO:0048870">
    <property type="term" value="P:cell motility"/>
    <property type="evidence" value="ECO:0007669"/>
    <property type="project" value="Ensembl"/>
</dbReference>
<dbReference type="GO" id="GO:0030836">
    <property type="term" value="P:positive regulation of actin filament depolymerization"/>
    <property type="evidence" value="ECO:0007669"/>
    <property type="project" value="Ensembl"/>
</dbReference>
<dbReference type="CDD" id="cd11286">
    <property type="entry name" value="ADF_cofilin_like"/>
    <property type="match status" value="1"/>
</dbReference>
<dbReference type="FunFam" id="3.40.20.10:FF:000010">
    <property type="entry name" value="Putative destrin"/>
    <property type="match status" value="1"/>
</dbReference>
<dbReference type="Gene3D" id="3.40.20.10">
    <property type="entry name" value="Severin"/>
    <property type="match status" value="1"/>
</dbReference>
<dbReference type="InterPro" id="IPR002108">
    <property type="entry name" value="ADF-H"/>
</dbReference>
<dbReference type="InterPro" id="IPR029006">
    <property type="entry name" value="ADF-H/Gelsolin-like_dom_sf"/>
</dbReference>
<dbReference type="InterPro" id="IPR017904">
    <property type="entry name" value="ADF/Cofilin"/>
</dbReference>
<dbReference type="PANTHER" id="PTHR11913">
    <property type="entry name" value="COFILIN-RELATED"/>
    <property type="match status" value="1"/>
</dbReference>
<dbReference type="Pfam" id="PF00241">
    <property type="entry name" value="Cofilin_ADF"/>
    <property type="match status" value="1"/>
</dbReference>
<dbReference type="PRINTS" id="PR00006">
    <property type="entry name" value="COFILIN"/>
</dbReference>
<dbReference type="SMART" id="SM00102">
    <property type="entry name" value="ADF"/>
    <property type="match status" value="1"/>
</dbReference>
<dbReference type="SUPFAM" id="SSF55753">
    <property type="entry name" value="Actin depolymerizing proteins"/>
    <property type="match status" value="1"/>
</dbReference>
<dbReference type="PROSITE" id="PS51263">
    <property type="entry name" value="ADF_H"/>
    <property type="match status" value="1"/>
</dbReference>
<organism>
    <name type="scientific">Homo sapiens</name>
    <name type="common">Human</name>
    <dbReference type="NCBI Taxonomy" id="9606"/>
    <lineage>
        <taxon>Eukaryota</taxon>
        <taxon>Metazoa</taxon>
        <taxon>Chordata</taxon>
        <taxon>Craniata</taxon>
        <taxon>Vertebrata</taxon>
        <taxon>Euteleostomi</taxon>
        <taxon>Mammalia</taxon>
        <taxon>Eutheria</taxon>
        <taxon>Euarchontoglires</taxon>
        <taxon>Primates</taxon>
        <taxon>Haplorrhini</taxon>
        <taxon>Catarrhini</taxon>
        <taxon>Hominidae</taxon>
        <taxon>Homo</taxon>
    </lineage>
</organism>
<evidence type="ECO:0000255" key="1"/>
<evidence type="ECO:0000255" key="2">
    <source>
        <dbReference type="PROSITE-ProRule" id="PRU00599"/>
    </source>
</evidence>
<evidence type="ECO:0000269" key="3">
    <source>
    </source>
</evidence>
<evidence type="ECO:0000269" key="4">
    <source>
    </source>
</evidence>
<evidence type="ECO:0000269" key="5">
    <source>
    </source>
</evidence>
<evidence type="ECO:0000303" key="6">
    <source>
    </source>
</evidence>
<evidence type="ECO:0000305" key="7"/>
<evidence type="ECO:0000305" key="8">
    <source>
    </source>
</evidence>
<evidence type="ECO:0007744" key="9">
    <source>
    </source>
</evidence>
<evidence type="ECO:0007744" key="10">
    <source>
    </source>
</evidence>
<evidence type="ECO:0007744" key="11">
    <source>
    </source>
</evidence>
<evidence type="ECO:0007744" key="12">
    <source>
    </source>
</evidence>
<evidence type="ECO:0007744" key="13">
    <source>
    </source>
</evidence>
<evidence type="ECO:0007744" key="14">
    <source>
    </source>
</evidence>
<evidence type="ECO:0007744" key="15">
    <source>
    </source>
</evidence>
<evidence type="ECO:0007744" key="16">
    <source>
    </source>
</evidence>
<evidence type="ECO:0007744" key="17">
    <source>
    </source>
</evidence>
<evidence type="ECO:0007744" key="18">
    <source>
    </source>
</evidence>
<proteinExistence type="evidence at protein level"/>
<keyword id="KW-0007">Acetylation</keyword>
<keyword id="KW-0009">Actin-binding</keyword>
<keyword id="KW-0025">Alternative splicing</keyword>
<keyword id="KW-0903">Direct protein sequencing</keyword>
<keyword id="KW-0597">Phosphoprotein</keyword>
<keyword id="KW-1267">Proteomics identification</keyword>
<keyword id="KW-1185">Reference proteome</keyword>
<keyword id="KW-0832">Ubl conjugation</keyword>
<comment type="function">
    <text evidence="3">Actin-depolymerizing protein. Severs actin filaments (F-actin) and binds to actin monomers (G-actin). Acts in a pH-independent manner.</text>
</comment>
<comment type="interaction">
    <interactant intactId="EBI-745191">
        <id>P60981</id>
    </interactant>
    <interactant intactId="EBI-353944">
        <id>P60709</id>
        <label>ACTB</label>
    </interactant>
    <organismsDiffer>false</organismsDiffer>
    <experiments>10</experiments>
</comment>
<comment type="interaction">
    <interactant intactId="EBI-745191">
        <id>P60981</id>
    </interactant>
    <interactant intactId="EBI-351292">
        <id>P63261</id>
        <label>ACTG1</label>
    </interactant>
    <organismsDiffer>false</organismsDiffer>
    <experiments>8</experiments>
</comment>
<comment type="interaction">
    <interactant intactId="EBI-745191">
        <id>P60981</id>
    </interactant>
    <interactant intactId="EBI-10201319">
        <id>Q549N0</id>
        <label>CFL2</label>
    </interactant>
    <organismsDiffer>false</organismsDiffer>
    <experiments>3</experiments>
</comment>
<comment type="interaction">
    <interactant intactId="EBI-745191">
        <id>P60981</id>
    </interactant>
    <interactant intactId="EBI-351218">
        <id>Q9Y281</id>
        <label>CFL2</label>
    </interactant>
    <organismsDiffer>false</organismsDiffer>
    <experiments>3</experiments>
</comment>
<comment type="interaction">
    <interactant intactId="EBI-745191">
        <id>P60981</id>
    </interactant>
    <interactant intactId="EBI-349854">
        <id>P13569</id>
        <label>CFTR</label>
    </interactant>
    <organismsDiffer>false</organismsDiffer>
    <experiments>16</experiments>
</comment>
<comment type="interaction">
    <interactant intactId="EBI-745191">
        <id>P60981</id>
    </interactant>
    <interactant intactId="EBI-9978131">
        <id>Q1KLZ0</id>
        <label>PS1TP5BP1</label>
    </interactant>
    <organismsDiffer>false</organismsDiffer>
    <experiments>3</experiments>
</comment>
<comment type="interaction">
    <interactant intactId="EBI-745191">
        <id>P60981</id>
    </interactant>
    <interactant intactId="EBI-529518">
        <id>Q86VP1</id>
        <label>TAX1BP1</label>
    </interactant>
    <organismsDiffer>false</organismsDiffer>
    <experiments>6</experiments>
</comment>
<comment type="interaction">
    <interactant intactId="EBI-745191">
        <id>P60981</id>
    </interactant>
    <interactant intactId="EBI-10180829">
        <id>Q7KZS0</id>
        <label>UBE2I</label>
    </interactant>
    <organismsDiffer>false</organismsDiffer>
    <experiments>3</experiments>
</comment>
<comment type="alternative products">
    <event type="alternative splicing"/>
    <isoform>
        <id>P60981-1</id>
        <name>1</name>
        <sequence type="displayed"/>
    </isoform>
    <isoform>
        <id>P60981-2</id>
        <name>2</name>
        <sequence type="described" ref="VSP_043069"/>
    </isoform>
</comment>
<comment type="tissue specificity">
    <text>Widely distributed in various tissues.</text>
</comment>
<comment type="PTM">
    <text evidence="8">ISGylated.</text>
</comment>
<comment type="similarity">
    <text evidence="7">Belongs to the actin-binding proteins ADF family.</text>
</comment>
<name>DEST_HUMAN</name>
<sequence length="165" mass="18506">MASGVQVADEVCRIFYDMKVRKCSTPEEIKKRKKAVIFCLSADKKCIIVEEGKEILVGDVGVTITDPFKHFVGMLPEKDCRYALYDASFETKESRKEELMFFLWAPELAPLKSKMIYASSKDAIKKKFQGIKHECQANGPEDLNRACIAEKLGGSLIVAFEGCPV</sequence>